<name>DNLJ_ACIC5</name>
<gene>
    <name evidence="1" type="primary">ligA</name>
    <name type="ordered locus">ACP_1809</name>
</gene>
<sequence>MSHASAAQQIESLRESIRHHEYLYYVQDQPEIDDLAFDELMRKLQRLEAEHPELITPDSPTQRVGGKPKEGFAKVAHSRPMLSLDNVNSEEELRDWERRVREQAGQNAEIEYVCEYKLDGLSMALHYRDGQLARGLTRGDGEIGEDVTTNVRTIRSVPLSIADGKLQQAKMPANFEVRGEVVMPFTAFEKLNEEREAQGLAPAANPRNAAAGTIRTLEPNIVAQRRLDFYAYFALTEKGEDAFGEQEEALDALATLGFRVNQHRHAAKSIETVVEFVNRAEEHRSRLGYEIDGVVVKVNSAVLQRRLGYTGRAPRWAVAYKFAARSGVTQVEDIQVQVGRTGKLTPVAWLAPVQVGGTTVTRATLHNADEIERLGLRIGDFVRIERGGDVIPKVVEVVDDAEHPRGTKHFHFPHACPACGSEVVRTPGEADYRCVNTDCPARLRESLLHFASRGVMNIEGMGEAIVMQLLGRGLVKTVSDIYSLTEEQLVSLERMGKKSATALLGEIDKSRQAPLDRVLFGLGIRFVGERTAQALAEEYGSMDALMQASREELERVNDVGPRVSEAIREFFDEPRNRDLVERLREAGLRFTGEKRKKTSQLAGLTFVLTGTLPGLSRDEAKGKIENAGGHVSGSVSKKTNYVVAGADAGSKLEKANSLGVPVIDEAALIKMLETEQA</sequence>
<comment type="function">
    <text evidence="1">DNA ligase that catalyzes the formation of phosphodiester linkages between 5'-phosphoryl and 3'-hydroxyl groups in double-stranded DNA using NAD as a coenzyme and as the energy source for the reaction. It is essential for DNA replication and repair of damaged DNA.</text>
</comment>
<comment type="catalytic activity">
    <reaction evidence="1">
        <text>NAD(+) + (deoxyribonucleotide)n-3'-hydroxyl + 5'-phospho-(deoxyribonucleotide)m = (deoxyribonucleotide)n+m + AMP + beta-nicotinamide D-nucleotide.</text>
        <dbReference type="EC" id="6.5.1.2"/>
    </reaction>
</comment>
<comment type="cofactor">
    <cofactor evidence="1">
        <name>Mg(2+)</name>
        <dbReference type="ChEBI" id="CHEBI:18420"/>
    </cofactor>
    <cofactor evidence="1">
        <name>Mn(2+)</name>
        <dbReference type="ChEBI" id="CHEBI:29035"/>
    </cofactor>
</comment>
<comment type="similarity">
    <text evidence="1">Belongs to the NAD-dependent DNA ligase family. LigA subfamily.</text>
</comment>
<reference key="1">
    <citation type="journal article" date="2009" name="Appl. Environ. Microbiol.">
        <title>Three genomes from the phylum Acidobacteria provide insight into the lifestyles of these microorganisms in soils.</title>
        <authorList>
            <person name="Ward N.L."/>
            <person name="Challacombe J.F."/>
            <person name="Janssen P.H."/>
            <person name="Henrissat B."/>
            <person name="Coutinho P.M."/>
            <person name="Wu M."/>
            <person name="Xie G."/>
            <person name="Haft D.H."/>
            <person name="Sait M."/>
            <person name="Badger J."/>
            <person name="Barabote R.D."/>
            <person name="Bradley B."/>
            <person name="Brettin T.S."/>
            <person name="Brinkac L.M."/>
            <person name="Bruce D."/>
            <person name="Creasy T."/>
            <person name="Daugherty S.C."/>
            <person name="Davidsen T.M."/>
            <person name="DeBoy R.T."/>
            <person name="Detter J.C."/>
            <person name="Dodson R.J."/>
            <person name="Durkin A.S."/>
            <person name="Ganapathy A."/>
            <person name="Gwinn-Giglio M."/>
            <person name="Han C.S."/>
            <person name="Khouri H."/>
            <person name="Kiss H."/>
            <person name="Kothari S.P."/>
            <person name="Madupu R."/>
            <person name="Nelson K.E."/>
            <person name="Nelson W.C."/>
            <person name="Paulsen I."/>
            <person name="Penn K."/>
            <person name="Ren Q."/>
            <person name="Rosovitz M.J."/>
            <person name="Selengut J.D."/>
            <person name="Shrivastava S."/>
            <person name="Sullivan S.A."/>
            <person name="Tapia R."/>
            <person name="Thompson L.S."/>
            <person name="Watkins K.L."/>
            <person name="Yang Q."/>
            <person name="Yu C."/>
            <person name="Zafar N."/>
            <person name="Zhou L."/>
            <person name="Kuske C.R."/>
        </authorList>
    </citation>
    <scope>NUCLEOTIDE SEQUENCE [LARGE SCALE GENOMIC DNA]</scope>
    <source>
        <strain>ATCC 51196 / DSM 11244 / BCRC 80197 / JCM 7670 / NBRC 15755 / NCIMB 13165 / 161</strain>
    </source>
</reference>
<proteinExistence type="inferred from homology"/>
<feature type="chain" id="PRO_0000380279" description="DNA ligase">
    <location>
        <begin position="1"/>
        <end position="677"/>
    </location>
</feature>
<feature type="domain" description="BRCT" evidence="1">
    <location>
        <begin position="596"/>
        <end position="677"/>
    </location>
</feature>
<feature type="active site" description="N6-AMP-lysine intermediate" evidence="1">
    <location>
        <position position="117"/>
    </location>
</feature>
<feature type="binding site" evidence="1">
    <location>
        <begin position="34"/>
        <end position="38"/>
    </location>
    <ligand>
        <name>NAD(+)</name>
        <dbReference type="ChEBI" id="CHEBI:57540"/>
    </ligand>
</feature>
<feature type="binding site" evidence="1">
    <location>
        <begin position="83"/>
        <end position="84"/>
    </location>
    <ligand>
        <name>NAD(+)</name>
        <dbReference type="ChEBI" id="CHEBI:57540"/>
    </ligand>
</feature>
<feature type="binding site" evidence="1">
    <location>
        <position position="115"/>
    </location>
    <ligand>
        <name>NAD(+)</name>
        <dbReference type="ChEBI" id="CHEBI:57540"/>
    </ligand>
</feature>
<feature type="binding site" evidence="1">
    <location>
        <position position="138"/>
    </location>
    <ligand>
        <name>NAD(+)</name>
        <dbReference type="ChEBI" id="CHEBI:57540"/>
    </ligand>
</feature>
<feature type="binding site" evidence="1">
    <location>
        <position position="180"/>
    </location>
    <ligand>
        <name>NAD(+)</name>
        <dbReference type="ChEBI" id="CHEBI:57540"/>
    </ligand>
</feature>
<feature type="binding site" evidence="1">
    <location>
        <position position="297"/>
    </location>
    <ligand>
        <name>NAD(+)</name>
        <dbReference type="ChEBI" id="CHEBI:57540"/>
    </ligand>
</feature>
<feature type="binding site" evidence="1">
    <location>
        <position position="321"/>
    </location>
    <ligand>
        <name>NAD(+)</name>
        <dbReference type="ChEBI" id="CHEBI:57540"/>
    </ligand>
</feature>
<feature type="binding site" evidence="1">
    <location>
        <position position="416"/>
    </location>
    <ligand>
        <name>Zn(2+)</name>
        <dbReference type="ChEBI" id="CHEBI:29105"/>
    </ligand>
</feature>
<feature type="binding site" evidence="1">
    <location>
        <position position="419"/>
    </location>
    <ligand>
        <name>Zn(2+)</name>
        <dbReference type="ChEBI" id="CHEBI:29105"/>
    </ligand>
</feature>
<feature type="binding site" evidence="1">
    <location>
        <position position="434"/>
    </location>
    <ligand>
        <name>Zn(2+)</name>
        <dbReference type="ChEBI" id="CHEBI:29105"/>
    </ligand>
</feature>
<feature type="binding site" evidence="1">
    <location>
        <position position="439"/>
    </location>
    <ligand>
        <name>Zn(2+)</name>
        <dbReference type="ChEBI" id="CHEBI:29105"/>
    </ligand>
</feature>
<protein>
    <recommendedName>
        <fullName evidence="1">DNA ligase</fullName>
        <ecNumber evidence="1">6.5.1.2</ecNumber>
    </recommendedName>
    <alternativeName>
        <fullName evidence="1">Polydeoxyribonucleotide synthase [NAD(+)]</fullName>
    </alternativeName>
</protein>
<accession>C1F7S7</accession>
<evidence type="ECO:0000255" key="1">
    <source>
        <dbReference type="HAMAP-Rule" id="MF_01588"/>
    </source>
</evidence>
<dbReference type="EC" id="6.5.1.2" evidence="1"/>
<dbReference type="EMBL" id="CP001472">
    <property type="protein sequence ID" value="ACO32726.1"/>
    <property type="molecule type" value="Genomic_DNA"/>
</dbReference>
<dbReference type="RefSeq" id="WP_015896929.1">
    <property type="nucleotide sequence ID" value="NC_012483.1"/>
</dbReference>
<dbReference type="SMR" id="C1F7S7"/>
<dbReference type="FunCoup" id="C1F7S7">
    <property type="interactions" value="423"/>
</dbReference>
<dbReference type="STRING" id="240015.ACP_1809"/>
<dbReference type="KEGG" id="aca:ACP_1809"/>
<dbReference type="eggNOG" id="COG0272">
    <property type="taxonomic scope" value="Bacteria"/>
</dbReference>
<dbReference type="HOGENOM" id="CLU_007764_2_1_0"/>
<dbReference type="InParanoid" id="C1F7S7"/>
<dbReference type="OrthoDB" id="9759736at2"/>
<dbReference type="Proteomes" id="UP000002207">
    <property type="component" value="Chromosome"/>
</dbReference>
<dbReference type="GO" id="GO:0005829">
    <property type="term" value="C:cytosol"/>
    <property type="evidence" value="ECO:0007669"/>
    <property type="project" value="TreeGrafter"/>
</dbReference>
<dbReference type="GO" id="GO:0003677">
    <property type="term" value="F:DNA binding"/>
    <property type="evidence" value="ECO:0007669"/>
    <property type="project" value="InterPro"/>
</dbReference>
<dbReference type="GO" id="GO:0003911">
    <property type="term" value="F:DNA ligase (NAD+) activity"/>
    <property type="evidence" value="ECO:0007669"/>
    <property type="project" value="UniProtKB-UniRule"/>
</dbReference>
<dbReference type="GO" id="GO:0046872">
    <property type="term" value="F:metal ion binding"/>
    <property type="evidence" value="ECO:0007669"/>
    <property type="project" value="UniProtKB-KW"/>
</dbReference>
<dbReference type="GO" id="GO:0006281">
    <property type="term" value="P:DNA repair"/>
    <property type="evidence" value="ECO:0007669"/>
    <property type="project" value="UniProtKB-KW"/>
</dbReference>
<dbReference type="GO" id="GO:0006260">
    <property type="term" value="P:DNA replication"/>
    <property type="evidence" value="ECO:0007669"/>
    <property type="project" value="UniProtKB-KW"/>
</dbReference>
<dbReference type="CDD" id="cd17748">
    <property type="entry name" value="BRCT_DNA_ligase_like"/>
    <property type="match status" value="1"/>
</dbReference>
<dbReference type="CDD" id="cd00114">
    <property type="entry name" value="LIGANc"/>
    <property type="match status" value="1"/>
</dbReference>
<dbReference type="FunFam" id="1.10.150.20:FF:000006">
    <property type="entry name" value="DNA ligase"/>
    <property type="match status" value="1"/>
</dbReference>
<dbReference type="FunFam" id="1.10.150.20:FF:000007">
    <property type="entry name" value="DNA ligase"/>
    <property type="match status" value="1"/>
</dbReference>
<dbReference type="FunFam" id="1.10.287.610:FF:000002">
    <property type="entry name" value="DNA ligase"/>
    <property type="match status" value="1"/>
</dbReference>
<dbReference type="FunFam" id="2.40.50.140:FF:000012">
    <property type="entry name" value="DNA ligase"/>
    <property type="match status" value="1"/>
</dbReference>
<dbReference type="FunFam" id="3.30.470.30:FF:000001">
    <property type="entry name" value="DNA ligase"/>
    <property type="match status" value="1"/>
</dbReference>
<dbReference type="Gene3D" id="6.20.10.30">
    <property type="match status" value="1"/>
</dbReference>
<dbReference type="Gene3D" id="1.10.150.20">
    <property type="entry name" value="5' to 3' exonuclease, C-terminal subdomain"/>
    <property type="match status" value="2"/>
</dbReference>
<dbReference type="Gene3D" id="3.40.50.10190">
    <property type="entry name" value="BRCT domain"/>
    <property type="match status" value="1"/>
</dbReference>
<dbReference type="Gene3D" id="3.30.470.30">
    <property type="entry name" value="DNA ligase/mRNA capping enzyme"/>
    <property type="match status" value="1"/>
</dbReference>
<dbReference type="Gene3D" id="1.10.287.610">
    <property type="entry name" value="Helix hairpin bin"/>
    <property type="match status" value="1"/>
</dbReference>
<dbReference type="Gene3D" id="2.40.50.140">
    <property type="entry name" value="Nucleic acid-binding proteins"/>
    <property type="match status" value="1"/>
</dbReference>
<dbReference type="HAMAP" id="MF_01588">
    <property type="entry name" value="DNA_ligase_A"/>
    <property type="match status" value="1"/>
</dbReference>
<dbReference type="InterPro" id="IPR001357">
    <property type="entry name" value="BRCT_dom"/>
</dbReference>
<dbReference type="InterPro" id="IPR036420">
    <property type="entry name" value="BRCT_dom_sf"/>
</dbReference>
<dbReference type="InterPro" id="IPR041663">
    <property type="entry name" value="DisA/LigA_HHH"/>
</dbReference>
<dbReference type="InterPro" id="IPR001679">
    <property type="entry name" value="DNA_ligase"/>
</dbReference>
<dbReference type="InterPro" id="IPR018239">
    <property type="entry name" value="DNA_ligase_AS"/>
</dbReference>
<dbReference type="InterPro" id="IPR033136">
    <property type="entry name" value="DNA_ligase_CS"/>
</dbReference>
<dbReference type="InterPro" id="IPR013839">
    <property type="entry name" value="DNAligase_adenylation"/>
</dbReference>
<dbReference type="InterPro" id="IPR013840">
    <property type="entry name" value="DNAligase_N"/>
</dbReference>
<dbReference type="InterPro" id="IPR003583">
    <property type="entry name" value="Hlx-hairpin-Hlx_DNA-bd_motif"/>
</dbReference>
<dbReference type="InterPro" id="IPR012340">
    <property type="entry name" value="NA-bd_OB-fold"/>
</dbReference>
<dbReference type="InterPro" id="IPR004150">
    <property type="entry name" value="NAD_DNA_ligase_OB"/>
</dbReference>
<dbReference type="InterPro" id="IPR010994">
    <property type="entry name" value="RuvA_2-like"/>
</dbReference>
<dbReference type="InterPro" id="IPR004149">
    <property type="entry name" value="Znf_DNAligase_C4"/>
</dbReference>
<dbReference type="NCBIfam" id="TIGR00575">
    <property type="entry name" value="dnlj"/>
    <property type="match status" value="1"/>
</dbReference>
<dbReference type="NCBIfam" id="NF005932">
    <property type="entry name" value="PRK07956.1"/>
    <property type="match status" value="1"/>
</dbReference>
<dbReference type="PANTHER" id="PTHR23389">
    <property type="entry name" value="CHROMOSOME TRANSMISSION FIDELITY FACTOR 18"/>
    <property type="match status" value="1"/>
</dbReference>
<dbReference type="PANTHER" id="PTHR23389:SF9">
    <property type="entry name" value="DNA LIGASE"/>
    <property type="match status" value="1"/>
</dbReference>
<dbReference type="Pfam" id="PF00533">
    <property type="entry name" value="BRCT"/>
    <property type="match status" value="1"/>
</dbReference>
<dbReference type="Pfam" id="PF01653">
    <property type="entry name" value="DNA_ligase_aden"/>
    <property type="match status" value="1"/>
</dbReference>
<dbReference type="Pfam" id="PF03120">
    <property type="entry name" value="DNA_ligase_OB"/>
    <property type="match status" value="1"/>
</dbReference>
<dbReference type="Pfam" id="PF03119">
    <property type="entry name" value="DNA_ligase_ZBD"/>
    <property type="match status" value="1"/>
</dbReference>
<dbReference type="Pfam" id="PF12826">
    <property type="entry name" value="HHH_2"/>
    <property type="match status" value="1"/>
</dbReference>
<dbReference type="Pfam" id="PF14520">
    <property type="entry name" value="HHH_5"/>
    <property type="match status" value="1"/>
</dbReference>
<dbReference type="Pfam" id="PF22745">
    <property type="entry name" value="Nlig-Ia"/>
    <property type="match status" value="1"/>
</dbReference>
<dbReference type="PIRSF" id="PIRSF001604">
    <property type="entry name" value="LigA"/>
    <property type="match status" value="1"/>
</dbReference>
<dbReference type="SMART" id="SM00292">
    <property type="entry name" value="BRCT"/>
    <property type="match status" value="1"/>
</dbReference>
<dbReference type="SMART" id="SM00278">
    <property type="entry name" value="HhH1"/>
    <property type="match status" value="3"/>
</dbReference>
<dbReference type="SMART" id="SM00532">
    <property type="entry name" value="LIGANc"/>
    <property type="match status" value="1"/>
</dbReference>
<dbReference type="SUPFAM" id="SSF52113">
    <property type="entry name" value="BRCT domain"/>
    <property type="match status" value="1"/>
</dbReference>
<dbReference type="SUPFAM" id="SSF56091">
    <property type="entry name" value="DNA ligase/mRNA capping enzyme, catalytic domain"/>
    <property type="match status" value="1"/>
</dbReference>
<dbReference type="SUPFAM" id="SSF50249">
    <property type="entry name" value="Nucleic acid-binding proteins"/>
    <property type="match status" value="1"/>
</dbReference>
<dbReference type="SUPFAM" id="SSF47781">
    <property type="entry name" value="RuvA domain 2-like"/>
    <property type="match status" value="1"/>
</dbReference>
<dbReference type="PROSITE" id="PS50172">
    <property type="entry name" value="BRCT"/>
    <property type="match status" value="1"/>
</dbReference>
<dbReference type="PROSITE" id="PS01055">
    <property type="entry name" value="DNA_LIGASE_N1"/>
    <property type="match status" value="1"/>
</dbReference>
<dbReference type="PROSITE" id="PS01056">
    <property type="entry name" value="DNA_LIGASE_N2"/>
    <property type="match status" value="1"/>
</dbReference>
<organism>
    <name type="scientific">Acidobacterium capsulatum (strain ATCC 51196 / DSM 11244 / BCRC 80197 / JCM 7670 / NBRC 15755 / NCIMB 13165 / 161)</name>
    <dbReference type="NCBI Taxonomy" id="240015"/>
    <lineage>
        <taxon>Bacteria</taxon>
        <taxon>Pseudomonadati</taxon>
        <taxon>Acidobacteriota</taxon>
        <taxon>Terriglobia</taxon>
        <taxon>Terriglobales</taxon>
        <taxon>Acidobacteriaceae</taxon>
        <taxon>Acidobacterium</taxon>
    </lineage>
</organism>
<keyword id="KW-0227">DNA damage</keyword>
<keyword id="KW-0234">DNA repair</keyword>
<keyword id="KW-0235">DNA replication</keyword>
<keyword id="KW-0436">Ligase</keyword>
<keyword id="KW-0460">Magnesium</keyword>
<keyword id="KW-0464">Manganese</keyword>
<keyword id="KW-0479">Metal-binding</keyword>
<keyword id="KW-0520">NAD</keyword>
<keyword id="KW-1185">Reference proteome</keyword>
<keyword id="KW-0862">Zinc</keyword>